<comment type="function">
    <text evidence="1 4">Electroneutral Cl(-)/HCO3(-) antiporter that favors chloride ion entry and efflux of hydrogencarbonate and sodium ion across the basolateral membrane and may participate in salivary secretion (PubMed:12225984). Also mediates Cl(-)/HCO3(-) exchange activity in the presence of K(+) as well as Cs(+), Li(+), and Rb(+). Does not contribute to Cl(-)/HCO3(-) exchanger in the apical membrane of the upper villous epithelium (By similarity).</text>
</comment>
<comment type="catalytic activity">
    <reaction evidence="1">
        <text>2 hydrogencarbonate(out) + chloride(in) + Na(+)(out) = 2 hydrogencarbonate(in) + chloride(out) + Na(+)(in)</text>
        <dbReference type="Rhea" id="RHEA:72739"/>
        <dbReference type="ChEBI" id="CHEBI:17544"/>
        <dbReference type="ChEBI" id="CHEBI:17996"/>
        <dbReference type="ChEBI" id="CHEBI:29101"/>
    </reaction>
</comment>
<comment type="catalytic activity">
    <reaction evidence="1">
        <text>K(+)(in) + 2 hydrogencarbonate(in) + chloride(out) = K(+)(out) + 2 hydrogencarbonate(out) + chloride(in)</text>
        <dbReference type="Rhea" id="RHEA:75059"/>
        <dbReference type="ChEBI" id="CHEBI:17544"/>
        <dbReference type="ChEBI" id="CHEBI:17996"/>
        <dbReference type="ChEBI" id="CHEBI:29103"/>
    </reaction>
</comment>
<comment type="catalytic activity">
    <reaction evidence="1">
        <text>Li(+)(in) + 2 hydrogencarbonate(in) + chloride(out) = Li(+)(out) + 2 hydrogencarbonate(out) + chloride(in)</text>
        <dbReference type="Rhea" id="RHEA:75063"/>
        <dbReference type="ChEBI" id="CHEBI:17544"/>
        <dbReference type="ChEBI" id="CHEBI:17996"/>
        <dbReference type="ChEBI" id="CHEBI:49713"/>
    </reaction>
</comment>
<comment type="catalytic activity">
    <reaction evidence="1">
        <text>Rb(+)(in) + 2 hydrogencarbonate(in) + chloride(out) = Rb(+)(out) + 2 hydrogencarbonate(out) + chloride(in)</text>
        <dbReference type="Rhea" id="RHEA:75067"/>
        <dbReference type="ChEBI" id="CHEBI:17544"/>
        <dbReference type="ChEBI" id="CHEBI:17996"/>
        <dbReference type="ChEBI" id="CHEBI:49847"/>
    </reaction>
</comment>
<comment type="catalytic activity">
    <reaction evidence="1">
        <text>Cs(+)(in) + 2 hydrogencarbonate(in) + chloride(out) = Cs(+)(out) + 2 hydrogencarbonate(out) + chloride(in)</text>
        <dbReference type="Rhea" id="RHEA:75071"/>
        <dbReference type="ChEBI" id="CHEBI:17544"/>
        <dbReference type="ChEBI" id="CHEBI:17996"/>
        <dbReference type="ChEBI" id="CHEBI:49547"/>
    </reaction>
</comment>
<comment type="activity regulation">
    <text evidence="4">4,4'-diisothiocyanatodihydrostilbene-2,2'- disulfonic acid (H2DIDS) potently inhibits chloride/hydrogencarbonate antiporter activity with 50% inhibition at about 5 uM (PubMed:12225984). Completely inhibits chloride/hydrogencarbonate antiporter activity at 200 uM of 4,4'-diisothiocyano-trans-stilbene-2,2'-disulfonic acid (DIDS) (PubMed:12225984).</text>
</comment>
<comment type="subcellular location">
    <subcellularLocation>
        <location evidence="4">Basolateral cell membrane</location>
        <topology evidence="2">Multi-pass membrane protein</topology>
    </subcellularLocation>
    <text evidence="1 4">Localized in the basolateral membrane of both alpha-intercalated cells and beta-intercalated cells in the cortical collecting duct (CCD) kidney cells (PubMed:12225984). Localized in the basolateral membrane of the submandibular gland (SMG) duct (By similarity).</text>
</comment>
<comment type="tissue specificity">
    <text evidence="4">Expressed in kidney and gastrointestinal tract (PubMed:12225984). In kidney, it is highly expressed in the cortex, expressed at intermediate level in the outer medulla and not expressed in the inner medulla (PubMed:12225984). It is expressed in the cecum, while it is absent in other segments of gastrointestinal tract (PubMed:12225984). Highly expressed in the cortical collecting duct (CCD) (PubMed:12225984). Expressed in both alpha-intercalated cells and beta-intercalated cells in the CCD (at protein level) (PubMed:12225984).</text>
</comment>
<comment type="similarity">
    <text evidence="6">Belongs to the anion exchanger (TC 2.A.31) family.</text>
</comment>
<gene>
    <name evidence="7" type="primary">Slc4a9</name>
    <name evidence="5" type="synonym">Ae4</name>
</gene>
<protein>
    <recommendedName>
        <fullName evidence="6">Anion exchange protein 4</fullName>
        <shortName>AE 4</shortName>
        <shortName>Anion exchanger 4</shortName>
    </recommendedName>
    <alternativeName>
        <fullName>Solute carrier family 4 member 9</fullName>
    </alternativeName>
</protein>
<proteinExistence type="evidence at protein level"/>
<reference key="1">
    <citation type="journal article" date="2002" name="Am. J. Physiol.">
        <title>AE4 is a DIDS-sensitive Cl(-)/HCO(-)(3) exchanger in the basolateral membrane of the renal CCD and the SMG duct.</title>
        <authorList>
            <person name="Ko S.B.H."/>
            <person name="Luo X."/>
            <person name="Hager H."/>
            <person name="Rojek A."/>
            <person name="Choi J.Y."/>
            <person name="Licht C."/>
            <person name="Suzuki M."/>
            <person name="Muallem S."/>
            <person name="Nielsen S."/>
            <person name="Ishibashi K."/>
        </authorList>
    </citation>
    <scope>NUCLEOTIDE SEQUENCE [MRNA]</scope>
    <scope>FUNCTION</scope>
    <scope>ACTIVITY REGULATION</scope>
    <scope>SUBCELLULAR LOCATION</scope>
    <scope>TISSUE SPECIFICITY</scope>
    <source>
        <tissue>Kidney</tissue>
    </source>
</reference>
<feature type="chain" id="PRO_0000079225" description="Anion exchange protein 4">
    <location>
        <begin position="1"/>
        <end position="953"/>
    </location>
</feature>
<feature type="transmembrane region" description="Helical" evidence="2">
    <location>
        <begin position="385"/>
        <end position="405"/>
    </location>
</feature>
<feature type="transmembrane region" description="Helical" evidence="2">
    <location>
        <begin position="413"/>
        <end position="433"/>
    </location>
</feature>
<feature type="transmembrane region" description="Helical" evidence="2">
    <location>
        <begin position="470"/>
        <end position="490"/>
    </location>
</feature>
<feature type="transmembrane region" description="Helical" evidence="2">
    <location>
        <begin position="501"/>
        <end position="521"/>
    </location>
</feature>
<feature type="transmembrane region" description="Helical" evidence="2">
    <location>
        <begin position="594"/>
        <end position="614"/>
    </location>
</feature>
<feature type="transmembrane region" description="Helical" evidence="2">
    <location>
        <begin position="635"/>
        <end position="655"/>
    </location>
</feature>
<feature type="transmembrane region" description="Helical" evidence="2">
    <location>
        <begin position="682"/>
        <end position="702"/>
    </location>
</feature>
<feature type="transmembrane region" description="Helical" evidence="2">
    <location>
        <begin position="728"/>
        <end position="748"/>
    </location>
</feature>
<feature type="transmembrane region" description="Helical" evidence="2">
    <location>
        <begin position="785"/>
        <end position="805"/>
    </location>
</feature>
<feature type="transmembrane region" description="Helical" evidence="2">
    <location>
        <begin position="807"/>
        <end position="827"/>
    </location>
</feature>
<feature type="transmembrane region" description="Helical" evidence="2">
    <location>
        <begin position="869"/>
        <end position="889"/>
    </location>
</feature>
<feature type="region of interest" description="Disordered" evidence="3">
    <location>
        <begin position="20"/>
        <end position="41"/>
    </location>
</feature>
<feature type="region of interest" description="Membrane (anion exchange)">
    <location>
        <begin position="385"/>
        <end position="953"/>
    </location>
</feature>
<feature type="region of interest" description="Disordered" evidence="3">
    <location>
        <begin position="916"/>
        <end position="938"/>
    </location>
</feature>
<feature type="compositionally biased region" description="Basic and acidic residues" evidence="3">
    <location>
        <begin position="916"/>
        <end position="927"/>
    </location>
</feature>
<feature type="glycosylation site" description="N-linked (GlcNAc...) asparagine" evidence="2">
    <location>
        <position position="546"/>
    </location>
</feature>
<feature type="glycosylation site" description="N-linked (GlcNAc...) asparagine" evidence="2">
    <location>
        <position position="570"/>
    </location>
</feature>
<feature type="glycosylation site" description="N-linked (GlcNAc...) asparagine" evidence="2">
    <location>
        <position position="932"/>
    </location>
</feature>
<feature type="glycosylation site" description="N-linked (GlcNAc...) asparagine" evidence="2">
    <location>
        <position position="949"/>
    </location>
</feature>
<sequence>MKLPGQEDFEGSDAHENVCSEQLDGDLGPGSGLDGPSDIDNGKAQGCKDPLLFIQLNELLGWPQALEWRETGRWLLFEEKLDIGAGRWSAPHVPTLALPSLQKLRGLLAEGIVLLDCPARSLLELVEQVVRVESLSPELRGQLQALLLQRPQHHIQTTGIRPCRRSNAFRKASRDEDTLLKHQNPLRQKLPPGAEAAAVLAGELGFLEQPLAAFVRLQNPVVLEPLTEVVLPSRFFCLLLGPSTLGRSYHETGRAAAVLLSDPQFQWSVRRASNLHDLLAALDAFLQEVTALPPGRWDRTARIPPPKCLPSQHKRFPSKLQEVTSLSRQSAALAENKHHHGPHTPIPELQRTGRLFGGLVQDVRRKACWYPSDFLDALHPQCFSAVLYIYLATVTNAITFGGLLGDATEGAQGVLESFLGTAVAGATFCLMAGQPLTILSSTGPVLVFERLLFSFSRDYSLDYLPFRLWVGIWVATFCLALVATEASLLVRYFTRFTEEGFCALISLIFIYDAVGKMLNLIRAYPIQRPGSPAYSCFCQYPGTGGNASEFDSTMFKDTEDVLNVHPGLVNASFLPPSECIRQGGYPRGPSCHTVPDIAFFSLLLFFTSFLCAIALKHVKNSRLFPSVVRKVFSDFSSVLAILLGCGLDAFLGLATPKLLVPTEFKPTLPGRGWLVSPFGANPWWLSVAAALPALLLSILIFMDQQITAVILNRAEYRLQKGAGFHLDLFCVAVLMLFTSALGLPWYVSATVISLAHMDSLRRESKACVPGEDPNFLGIREQRLTGLVVFILTGVSIFLAPVLKFIPMPVLYGIFLYMGVAALSSMQFMKRVQLLLMPRKHQPDVLLLRHVPLIRVHLFTAIQLACLGLLWVIKSTPAAIVFPLMLLGLVAVRKALEWIFSPQELLWLDELMPEEEKTIPENRPEPEHLFSGNDSENSELMYQPKAPEINISVN</sequence>
<name>B3A4_RAT</name>
<evidence type="ECO:0000250" key="1">
    <source>
        <dbReference type="UniProtKB" id="A0A494BA31"/>
    </source>
</evidence>
<evidence type="ECO:0000255" key="2"/>
<evidence type="ECO:0000256" key="3">
    <source>
        <dbReference type="SAM" id="MobiDB-lite"/>
    </source>
</evidence>
<evidence type="ECO:0000269" key="4">
    <source>
    </source>
</evidence>
<evidence type="ECO:0000303" key="5">
    <source>
    </source>
</evidence>
<evidence type="ECO:0000305" key="6"/>
<evidence type="ECO:0000312" key="7">
    <source>
        <dbReference type="RGD" id="628811"/>
    </source>
</evidence>
<accession>Q8K4V2</accession>
<organism>
    <name type="scientific">Rattus norvegicus</name>
    <name type="common">Rat</name>
    <dbReference type="NCBI Taxonomy" id="10116"/>
    <lineage>
        <taxon>Eukaryota</taxon>
        <taxon>Metazoa</taxon>
        <taxon>Chordata</taxon>
        <taxon>Craniata</taxon>
        <taxon>Vertebrata</taxon>
        <taxon>Euteleostomi</taxon>
        <taxon>Mammalia</taxon>
        <taxon>Eutheria</taxon>
        <taxon>Euarchontoglires</taxon>
        <taxon>Glires</taxon>
        <taxon>Rodentia</taxon>
        <taxon>Myomorpha</taxon>
        <taxon>Muroidea</taxon>
        <taxon>Muridae</taxon>
        <taxon>Murinae</taxon>
        <taxon>Rattus</taxon>
    </lineage>
</organism>
<keyword id="KW-0039">Anion exchange</keyword>
<keyword id="KW-0050">Antiport</keyword>
<keyword id="KW-1003">Cell membrane</keyword>
<keyword id="KW-0325">Glycoprotein</keyword>
<keyword id="KW-0406">Ion transport</keyword>
<keyword id="KW-0472">Membrane</keyword>
<keyword id="KW-1185">Reference proteome</keyword>
<keyword id="KW-0812">Transmembrane</keyword>
<keyword id="KW-1133">Transmembrane helix</keyword>
<keyword id="KW-0813">Transport</keyword>
<dbReference type="EMBL" id="AB024339">
    <property type="protein sequence ID" value="BAC10662.1"/>
    <property type="molecule type" value="mRNA"/>
</dbReference>
<dbReference type="RefSeq" id="NP_690921.1">
    <property type="nucleotide sequence ID" value="NM_152938.1"/>
</dbReference>
<dbReference type="SMR" id="Q8K4V2"/>
<dbReference type="STRING" id="10116.ENSRNOP00000025137"/>
<dbReference type="GlyCosmos" id="Q8K4V2">
    <property type="glycosylation" value="2 sites, No reported glycans"/>
</dbReference>
<dbReference type="GlyGen" id="Q8K4V2">
    <property type="glycosylation" value="4 sites"/>
</dbReference>
<dbReference type="iPTMnet" id="Q8K4V2"/>
<dbReference type="PhosphoSitePlus" id="Q8K4V2"/>
<dbReference type="PaxDb" id="10116-ENSRNOP00000025137"/>
<dbReference type="GeneID" id="266612"/>
<dbReference type="KEGG" id="rno:266612"/>
<dbReference type="UCSC" id="RGD:628811">
    <property type="organism name" value="rat"/>
</dbReference>
<dbReference type="AGR" id="RGD:628811"/>
<dbReference type="CTD" id="83697"/>
<dbReference type="RGD" id="628811">
    <property type="gene designation" value="Slc4a9"/>
</dbReference>
<dbReference type="eggNOG" id="KOG1172">
    <property type="taxonomic scope" value="Eukaryota"/>
</dbReference>
<dbReference type="InParanoid" id="Q8K4V2"/>
<dbReference type="PhylomeDB" id="Q8K4V2"/>
<dbReference type="Reactome" id="R-RNO-425381">
    <property type="pathway name" value="Bicarbonate transporters"/>
</dbReference>
<dbReference type="PRO" id="PR:Q8K4V2"/>
<dbReference type="Proteomes" id="UP000002494">
    <property type="component" value="Unplaced"/>
</dbReference>
<dbReference type="GO" id="GO:0045177">
    <property type="term" value="C:apical part of cell"/>
    <property type="evidence" value="ECO:0000266"/>
    <property type="project" value="RGD"/>
</dbReference>
<dbReference type="GO" id="GO:0016323">
    <property type="term" value="C:basolateral plasma membrane"/>
    <property type="evidence" value="ECO:0000314"/>
    <property type="project" value="RGD"/>
</dbReference>
<dbReference type="GO" id="GO:0016020">
    <property type="term" value="C:membrane"/>
    <property type="evidence" value="ECO:0000266"/>
    <property type="project" value="RGD"/>
</dbReference>
<dbReference type="GO" id="GO:0005886">
    <property type="term" value="C:plasma membrane"/>
    <property type="evidence" value="ECO:0000318"/>
    <property type="project" value="GO_Central"/>
</dbReference>
<dbReference type="GO" id="GO:0140900">
    <property type="term" value="F:chloride:bicarbonate antiporter activity"/>
    <property type="evidence" value="ECO:0000314"/>
    <property type="project" value="UniProtKB"/>
</dbReference>
<dbReference type="GO" id="GO:0140892">
    <property type="term" value="F:sodium,bicarbonate:chloride antiporter activity"/>
    <property type="evidence" value="ECO:0000266"/>
    <property type="project" value="RGD"/>
</dbReference>
<dbReference type="GO" id="GO:0008510">
    <property type="term" value="F:sodium:bicarbonate symporter activity"/>
    <property type="evidence" value="ECO:0000250"/>
    <property type="project" value="UniProtKB"/>
</dbReference>
<dbReference type="GO" id="GO:0015701">
    <property type="term" value="P:bicarbonate transport"/>
    <property type="evidence" value="ECO:0000318"/>
    <property type="project" value="GO_Central"/>
</dbReference>
<dbReference type="GO" id="GO:0006820">
    <property type="term" value="P:monoatomic anion transport"/>
    <property type="evidence" value="ECO:0000314"/>
    <property type="project" value="RGD"/>
</dbReference>
<dbReference type="GO" id="GO:0051453">
    <property type="term" value="P:regulation of intracellular pH"/>
    <property type="evidence" value="ECO:0000318"/>
    <property type="project" value="GO_Central"/>
</dbReference>
<dbReference type="GO" id="GO:0046541">
    <property type="term" value="P:saliva secretion"/>
    <property type="evidence" value="ECO:0000266"/>
    <property type="project" value="RGD"/>
</dbReference>
<dbReference type="GO" id="GO:0035725">
    <property type="term" value="P:sodium ion transmembrane transport"/>
    <property type="evidence" value="ECO:0000314"/>
    <property type="project" value="UniProtKB"/>
</dbReference>
<dbReference type="GO" id="GO:0055085">
    <property type="term" value="P:transmembrane transport"/>
    <property type="evidence" value="ECO:0000318"/>
    <property type="project" value="GO_Central"/>
</dbReference>
<dbReference type="FunFam" id="1.10.287.570:FF:000001">
    <property type="entry name" value="Anion exchange protein"/>
    <property type="match status" value="1"/>
</dbReference>
<dbReference type="FunFam" id="3.40.930.10:FF:000011">
    <property type="entry name" value="Anion exchange protein 4"/>
    <property type="match status" value="1"/>
</dbReference>
<dbReference type="Gene3D" id="1.10.287.570">
    <property type="entry name" value="Helical hairpin bin"/>
    <property type="match status" value="1"/>
</dbReference>
<dbReference type="Gene3D" id="3.40.930.10">
    <property type="entry name" value="Mannitol-specific EII, Chain A"/>
    <property type="match status" value="1"/>
</dbReference>
<dbReference type="InterPro" id="IPR013769">
    <property type="entry name" value="Band3_cytoplasmic_dom"/>
</dbReference>
<dbReference type="InterPro" id="IPR011531">
    <property type="entry name" value="HCO3_transpt-like_TM_dom"/>
</dbReference>
<dbReference type="InterPro" id="IPR003020">
    <property type="entry name" value="HCO3_transpt_euk"/>
</dbReference>
<dbReference type="InterPro" id="IPR003024">
    <property type="entry name" value="Na/HCO3_transpt"/>
</dbReference>
<dbReference type="InterPro" id="IPR016152">
    <property type="entry name" value="PTrfase/Anion_transptr"/>
</dbReference>
<dbReference type="NCBIfam" id="TIGR00834">
    <property type="entry name" value="ae"/>
    <property type="match status" value="1"/>
</dbReference>
<dbReference type="PANTHER" id="PTHR11453">
    <property type="entry name" value="ANION EXCHANGE PROTEIN"/>
    <property type="match status" value="1"/>
</dbReference>
<dbReference type="PANTHER" id="PTHR11453:SF52">
    <property type="entry name" value="ANION EXCHANGE PROTEIN 4"/>
    <property type="match status" value="1"/>
</dbReference>
<dbReference type="Pfam" id="PF07565">
    <property type="entry name" value="Band_3_cyto"/>
    <property type="match status" value="2"/>
</dbReference>
<dbReference type="Pfam" id="PF00955">
    <property type="entry name" value="HCO3_cotransp"/>
    <property type="match status" value="1"/>
</dbReference>
<dbReference type="PRINTS" id="PR01231">
    <property type="entry name" value="HCO3TRNSPORT"/>
</dbReference>
<dbReference type="PRINTS" id="PR01232">
    <property type="entry name" value="NAHCO3TRSPRT"/>
</dbReference>
<dbReference type="SUPFAM" id="SSF55804">
    <property type="entry name" value="Phoshotransferase/anion transport protein"/>
    <property type="match status" value="1"/>
</dbReference>